<accession>A5GR45</accession>
<evidence type="ECO:0000255" key="1">
    <source>
        <dbReference type="HAMAP-Rule" id="MF_00613"/>
    </source>
</evidence>
<protein>
    <recommendedName>
        <fullName evidence="1">Photosystem I reaction center subunit IV</fullName>
    </recommendedName>
</protein>
<comment type="function">
    <text evidence="1">Stabilizes the interaction between PsaC and the PSI core, assists the docking of the ferredoxin to PSI and interacts with ferredoxin-NADP oxidoreductase.</text>
</comment>
<comment type="subcellular location">
    <subcellularLocation>
        <location evidence="1">Cellular thylakoid membrane</location>
        <topology evidence="1">Peripheral membrane protein</topology>
    </subcellularLocation>
</comment>
<comment type="similarity">
    <text evidence="1">Belongs to the PsaE family.</text>
</comment>
<sequence length="69" mass="7655">MAISRGDKVRIRRPESYWFNEVGTVASIDTSGIRYPVVVRFEKVNYNGFSGVDGGINTNNFAEAELDPA</sequence>
<dbReference type="EMBL" id="CT978603">
    <property type="protein sequence ID" value="CAK27354.1"/>
    <property type="molecule type" value="Genomic_DNA"/>
</dbReference>
<dbReference type="SMR" id="A5GR45"/>
<dbReference type="STRING" id="316278.SynRCC307_0451"/>
<dbReference type="KEGG" id="syr:SynRCC307_0451"/>
<dbReference type="eggNOG" id="ENOG503313D">
    <property type="taxonomic scope" value="Bacteria"/>
</dbReference>
<dbReference type="HOGENOM" id="CLU_136462_2_1_3"/>
<dbReference type="OrthoDB" id="427926at2"/>
<dbReference type="Proteomes" id="UP000001115">
    <property type="component" value="Chromosome"/>
</dbReference>
<dbReference type="GO" id="GO:0009538">
    <property type="term" value="C:photosystem I reaction center"/>
    <property type="evidence" value="ECO:0007669"/>
    <property type="project" value="InterPro"/>
</dbReference>
<dbReference type="GO" id="GO:0031676">
    <property type="term" value="C:plasma membrane-derived thylakoid membrane"/>
    <property type="evidence" value="ECO:0007669"/>
    <property type="project" value="UniProtKB-SubCell"/>
</dbReference>
<dbReference type="GO" id="GO:0015979">
    <property type="term" value="P:photosynthesis"/>
    <property type="evidence" value="ECO:0007669"/>
    <property type="project" value="UniProtKB-UniRule"/>
</dbReference>
<dbReference type="Gene3D" id="2.30.30.50">
    <property type="match status" value="1"/>
</dbReference>
<dbReference type="HAMAP" id="MF_00613">
    <property type="entry name" value="PSI_PsaE"/>
    <property type="match status" value="1"/>
</dbReference>
<dbReference type="InterPro" id="IPR008990">
    <property type="entry name" value="Elect_transpt_acc-like_dom_sf"/>
</dbReference>
<dbReference type="InterPro" id="IPR003375">
    <property type="entry name" value="PSI_PsaE"/>
</dbReference>
<dbReference type="NCBIfam" id="NF002745">
    <property type="entry name" value="PRK02749.1"/>
    <property type="match status" value="1"/>
</dbReference>
<dbReference type="PANTHER" id="PTHR34549">
    <property type="entry name" value="PHOTOSYSTEM I REACTION CENTER SUBUNIT IV A, CHLOROPLASTIC-RELATED"/>
    <property type="match status" value="1"/>
</dbReference>
<dbReference type="PANTHER" id="PTHR34549:SF2">
    <property type="entry name" value="PHOTOSYSTEM I SUBUNIT IV"/>
    <property type="match status" value="1"/>
</dbReference>
<dbReference type="Pfam" id="PF02427">
    <property type="entry name" value="PSI_PsaE"/>
    <property type="match status" value="1"/>
</dbReference>
<dbReference type="SUPFAM" id="SSF50090">
    <property type="entry name" value="Electron transport accessory proteins"/>
    <property type="match status" value="1"/>
</dbReference>
<gene>
    <name evidence="1" type="primary">psaE</name>
    <name type="ordered locus">SynRCC307_0451</name>
</gene>
<proteinExistence type="inferred from homology"/>
<reference key="1">
    <citation type="submission" date="2006-05" db="EMBL/GenBank/DDBJ databases">
        <authorList>
            <consortium name="Genoscope"/>
        </authorList>
    </citation>
    <scope>NUCLEOTIDE SEQUENCE [LARGE SCALE GENOMIC DNA]</scope>
    <source>
        <strain>RCC307</strain>
    </source>
</reference>
<name>PSAE_SYNR3</name>
<organism>
    <name type="scientific">Synechococcus sp. (strain RCC307)</name>
    <dbReference type="NCBI Taxonomy" id="316278"/>
    <lineage>
        <taxon>Bacteria</taxon>
        <taxon>Bacillati</taxon>
        <taxon>Cyanobacteriota</taxon>
        <taxon>Cyanophyceae</taxon>
        <taxon>Synechococcales</taxon>
        <taxon>Synechococcaceae</taxon>
        <taxon>Synechococcus</taxon>
    </lineage>
</organism>
<feature type="chain" id="PRO_1000061312" description="Photosystem I reaction center subunit IV">
    <location>
        <begin position="1"/>
        <end position="69"/>
    </location>
</feature>
<keyword id="KW-0472">Membrane</keyword>
<keyword id="KW-0602">Photosynthesis</keyword>
<keyword id="KW-0603">Photosystem I</keyword>
<keyword id="KW-1185">Reference proteome</keyword>
<keyword id="KW-0793">Thylakoid</keyword>